<reference key="1">
    <citation type="journal article" date="2008" name="J. Bacteriol.">
        <title>Comparative genome sequence analysis of multidrug-resistant Acinetobacter baumannii.</title>
        <authorList>
            <person name="Adams M.D."/>
            <person name="Goglin K."/>
            <person name="Molyneaux N."/>
            <person name="Hujer K.M."/>
            <person name="Lavender H."/>
            <person name="Jamison J.J."/>
            <person name="MacDonald I.J."/>
            <person name="Martin K.M."/>
            <person name="Russo T."/>
            <person name="Campagnari A.A."/>
            <person name="Hujer A.M."/>
            <person name="Bonomo R.A."/>
            <person name="Gill S.R."/>
        </authorList>
    </citation>
    <scope>NUCLEOTIDE SEQUENCE [LARGE SCALE GENOMIC DNA]</scope>
    <source>
        <strain>AB0057</strain>
    </source>
</reference>
<evidence type="ECO:0000255" key="1">
    <source>
        <dbReference type="HAMAP-Rule" id="MF_00023"/>
    </source>
</evidence>
<gene>
    <name evidence="1" type="primary">smpB</name>
    <name type="ordered locus">AB57_0892</name>
</gene>
<sequence>MAKATVVKKHNGGTIAQNKRARHDYFIEEKFEAGMSLLGWEVKSLRAGRMSLTESYVIFKNGEAFLFGAQIQPLLSASTHIVPEATRTRKLLLSRRELEKLMGAVNQKGYSCVPLACYWKGHLVKLEIALVKGKQLHDKRATEKERDWQRDKARIFHK</sequence>
<comment type="function">
    <text evidence="1">Required for rescue of stalled ribosomes mediated by trans-translation. Binds to transfer-messenger RNA (tmRNA), required for stable association of tmRNA with ribosomes. tmRNA and SmpB together mimic tRNA shape, replacing the anticodon stem-loop with SmpB. tmRNA is encoded by the ssrA gene; the 2 termini fold to resemble tRNA(Ala) and it encodes a 'tag peptide', a short internal open reading frame. During trans-translation Ala-aminoacylated tmRNA acts like a tRNA, entering the A-site of stalled ribosomes, displacing the stalled mRNA. The ribosome then switches to translate the ORF on the tmRNA; the nascent peptide is terminated with the 'tag peptide' encoded by the tmRNA and targeted for degradation. The ribosome is freed to recommence translation, which seems to be the essential function of trans-translation.</text>
</comment>
<comment type="subcellular location">
    <subcellularLocation>
        <location evidence="1">Cytoplasm</location>
    </subcellularLocation>
    <text evidence="1">The tmRNA-SmpB complex associates with stalled 70S ribosomes.</text>
</comment>
<comment type="similarity">
    <text evidence="1">Belongs to the SmpB family.</text>
</comment>
<proteinExistence type="inferred from homology"/>
<accession>B7I7Q2</accession>
<name>SSRP_ACIB5</name>
<keyword id="KW-0963">Cytoplasm</keyword>
<keyword id="KW-0694">RNA-binding</keyword>
<feature type="chain" id="PRO_1000116409" description="SsrA-binding protein">
    <location>
        <begin position="1"/>
        <end position="158"/>
    </location>
</feature>
<protein>
    <recommendedName>
        <fullName evidence="1">SsrA-binding protein</fullName>
    </recommendedName>
    <alternativeName>
        <fullName evidence="1">Small protein B</fullName>
    </alternativeName>
</protein>
<organism>
    <name type="scientific">Acinetobacter baumannii (strain AB0057)</name>
    <dbReference type="NCBI Taxonomy" id="480119"/>
    <lineage>
        <taxon>Bacteria</taxon>
        <taxon>Pseudomonadati</taxon>
        <taxon>Pseudomonadota</taxon>
        <taxon>Gammaproteobacteria</taxon>
        <taxon>Moraxellales</taxon>
        <taxon>Moraxellaceae</taxon>
        <taxon>Acinetobacter</taxon>
        <taxon>Acinetobacter calcoaceticus/baumannii complex</taxon>
    </lineage>
</organism>
<dbReference type="EMBL" id="CP001182">
    <property type="protein sequence ID" value="ACJ40686.1"/>
    <property type="molecule type" value="Genomic_DNA"/>
</dbReference>
<dbReference type="RefSeq" id="WP_001029798.1">
    <property type="nucleotide sequence ID" value="NC_011586.2"/>
</dbReference>
<dbReference type="SMR" id="B7I7Q2"/>
<dbReference type="GeneID" id="92892774"/>
<dbReference type="KEGG" id="abn:AB57_0892"/>
<dbReference type="HOGENOM" id="CLU_108953_3_0_6"/>
<dbReference type="Proteomes" id="UP000007094">
    <property type="component" value="Chromosome"/>
</dbReference>
<dbReference type="GO" id="GO:0005829">
    <property type="term" value="C:cytosol"/>
    <property type="evidence" value="ECO:0007669"/>
    <property type="project" value="TreeGrafter"/>
</dbReference>
<dbReference type="GO" id="GO:0003723">
    <property type="term" value="F:RNA binding"/>
    <property type="evidence" value="ECO:0007669"/>
    <property type="project" value="UniProtKB-UniRule"/>
</dbReference>
<dbReference type="GO" id="GO:0070929">
    <property type="term" value="P:trans-translation"/>
    <property type="evidence" value="ECO:0007669"/>
    <property type="project" value="UniProtKB-UniRule"/>
</dbReference>
<dbReference type="CDD" id="cd09294">
    <property type="entry name" value="SmpB"/>
    <property type="match status" value="1"/>
</dbReference>
<dbReference type="Gene3D" id="2.40.280.10">
    <property type="match status" value="1"/>
</dbReference>
<dbReference type="HAMAP" id="MF_00023">
    <property type="entry name" value="SmpB"/>
    <property type="match status" value="1"/>
</dbReference>
<dbReference type="InterPro" id="IPR023620">
    <property type="entry name" value="SmpB"/>
</dbReference>
<dbReference type="InterPro" id="IPR000037">
    <property type="entry name" value="SsrA-bd_prot"/>
</dbReference>
<dbReference type="InterPro" id="IPR020081">
    <property type="entry name" value="SsrA-bd_prot_CS"/>
</dbReference>
<dbReference type="NCBIfam" id="NF003843">
    <property type="entry name" value="PRK05422.1"/>
    <property type="match status" value="1"/>
</dbReference>
<dbReference type="NCBIfam" id="TIGR00086">
    <property type="entry name" value="smpB"/>
    <property type="match status" value="1"/>
</dbReference>
<dbReference type="PANTHER" id="PTHR30308:SF2">
    <property type="entry name" value="SSRA-BINDING PROTEIN"/>
    <property type="match status" value="1"/>
</dbReference>
<dbReference type="PANTHER" id="PTHR30308">
    <property type="entry name" value="TMRNA-BINDING COMPONENT OF TRANS-TRANSLATION TAGGING COMPLEX"/>
    <property type="match status" value="1"/>
</dbReference>
<dbReference type="Pfam" id="PF01668">
    <property type="entry name" value="SmpB"/>
    <property type="match status" value="1"/>
</dbReference>
<dbReference type="SUPFAM" id="SSF74982">
    <property type="entry name" value="Small protein B (SmpB)"/>
    <property type="match status" value="1"/>
</dbReference>
<dbReference type="PROSITE" id="PS01317">
    <property type="entry name" value="SSRP"/>
    <property type="match status" value="1"/>
</dbReference>